<accession>Q6MFY6</accession>
<accession>Q6AXZ8</accession>
<gene>
    <name type="primary">Ppp1r11</name>
</gene>
<name>PP1RB_RAT</name>
<feature type="initiator methionine" description="Removed" evidence="1">
    <location>
        <position position="1"/>
    </location>
</feature>
<feature type="chain" id="PRO_0000239623" description="E3 ubiquitin-protein ligase PPP1R11">
    <location>
        <begin position="2"/>
        <end position="127"/>
    </location>
</feature>
<feature type="region of interest" description="Disordered" evidence="3">
    <location>
        <begin position="1"/>
        <end position="55"/>
    </location>
</feature>
<feature type="region of interest" description="Atypical RING finger domain 1" evidence="1">
    <location>
        <begin position="53"/>
        <end position="63"/>
    </location>
</feature>
<feature type="region of interest" description="Disordered" evidence="3">
    <location>
        <begin position="70"/>
        <end position="127"/>
    </location>
</feature>
<feature type="region of interest" description="Atypical RING finger domain 2" evidence="1">
    <location>
        <begin position="86"/>
        <end position="95"/>
    </location>
</feature>
<feature type="compositionally biased region" description="Low complexity" evidence="3">
    <location>
        <begin position="11"/>
        <end position="23"/>
    </location>
</feature>
<feature type="compositionally biased region" description="Basic and acidic residues" evidence="3">
    <location>
        <begin position="40"/>
        <end position="55"/>
    </location>
</feature>
<feature type="compositionally biased region" description="Basic residues" evidence="3">
    <location>
        <begin position="90"/>
        <end position="100"/>
    </location>
</feature>
<feature type="compositionally biased region" description="Pro residues" evidence="3">
    <location>
        <begin position="103"/>
        <end position="127"/>
    </location>
</feature>
<feature type="modified residue" description="N-acetylalanine" evidence="1">
    <location>
        <position position="2"/>
    </location>
</feature>
<feature type="modified residue" description="Phosphoserine" evidence="1">
    <location>
        <position position="74"/>
    </location>
</feature>
<feature type="modified residue" description="Phosphoserine" evidence="1">
    <location>
        <position position="75"/>
    </location>
</feature>
<feature type="modified residue" description="Phosphothreonine" evidence="1">
    <location>
        <position position="76"/>
    </location>
</feature>
<feature type="modified residue" description="Phosphoserine" evidence="1">
    <location>
        <position position="78"/>
    </location>
</feature>
<feature type="modified residue" description="Phosphothreonine" evidence="1">
    <location>
        <position position="110"/>
    </location>
</feature>
<feature type="splice variant" id="VSP_019247" description="In isoform 2." evidence="4">
    <original>E</original>
    <variation>VRNAGRGA</variation>
    <location>
        <position position="25"/>
    </location>
</feature>
<evidence type="ECO:0000250" key="1">
    <source>
        <dbReference type="UniProtKB" id="O60927"/>
    </source>
</evidence>
<evidence type="ECO:0000250" key="2">
    <source>
        <dbReference type="UniProtKB" id="Q8K1L5"/>
    </source>
</evidence>
<evidence type="ECO:0000256" key="3">
    <source>
        <dbReference type="SAM" id="MobiDB-lite"/>
    </source>
</evidence>
<evidence type="ECO:0000305" key="4"/>
<reference key="1">
    <citation type="journal article" date="2004" name="Genome Res.">
        <title>The genomic sequence and comparative analysis of the rat major histocompatibility complex.</title>
        <authorList>
            <person name="Hurt P."/>
            <person name="Walter L."/>
            <person name="Sudbrak R."/>
            <person name="Klages S."/>
            <person name="Mueller I."/>
            <person name="Shiina T."/>
            <person name="Inoko H."/>
            <person name="Lehrach H."/>
            <person name="Guenther E."/>
            <person name="Reinhardt R."/>
            <person name="Himmelbauer H."/>
        </authorList>
    </citation>
    <scope>NUCLEOTIDE SEQUENCE [LARGE SCALE GENOMIC DNA]</scope>
    <scope>ALTERNATIVE SPLICING (ISOFORM 2)</scope>
    <source>
        <strain>Brown Norway</strain>
    </source>
</reference>
<reference key="2">
    <citation type="journal article" date="2004" name="Genome Res.">
        <title>The status, quality, and expansion of the NIH full-length cDNA project: the Mammalian Gene Collection (MGC).</title>
        <authorList>
            <consortium name="The MGC Project Team"/>
        </authorList>
    </citation>
    <scope>NUCLEOTIDE SEQUENCE [LARGE SCALE MRNA] (ISOFORM 1)</scope>
    <source>
        <tissue>Testis</tissue>
    </source>
</reference>
<keyword id="KW-0007">Acetylation</keyword>
<keyword id="KW-0025">Alternative splicing</keyword>
<keyword id="KW-0597">Phosphoprotein</keyword>
<keyword id="KW-0650">Protein phosphatase inhibitor</keyword>
<keyword id="KW-1185">Reference proteome</keyword>
<keyword id="KW-0808">Transferase</keyword>
<keyword id="KW-0832">Ubl conjugation</keyword>
<keyword id="KW-0833">Ubl conjugation pathway</keyword>
<sequence>MAEAGAGGLSETVTETTVTVTTEPENRSLTIKLRKRKPEKKVEWSSDTVDNEHMGRRSSKCCCIYEKPRAFGESSTESDEDEEEGCGHTHCVRGHRKGRRPTTPGPTPTTPPQPPDPSQPPPGPMQH</sequence>
<protein>
    <recommendedName>
        <fullName>E3 ubiquitin-protein ligase PPP1R11</fullName>
        <ecNumber>2.3.2.27</ecNumber>
    </recommendedName>
    <alternativeName>
        <fullName>Protein phosphatase 1 regulatory subunit 11</fullName>
    </alternativeName>
</protein>
<organism>
    <name type="scientific">Rattus norvegicus</name>
    <name type="common">Rat</name>
    <dbReference type="NCBI Taxonomy" id="10116"/>
    <lineage>
        <taxon>Eukaryota</taxon>
        <taxon>Metazoa</taxon>
        <taxon>Chordata</taxon>
        <taxon>Craniata</taxon>
        <taxon>Vertebrata</taxon>
        <taxon>Euteleostomi</taxon>
        <taxon>Mammalia</taxon>
        <taxon>Eutheria</taxon>
        <taxon>Euarchontoglires</taxon>
        <taxon>Glires</taxon>
        <taxon>Rodentia</taxon>
        <taxon>Myomorpha</taxon>
        <taxon>Muroidea</taxon>
        <taxon>Muridae</taxon>
        <taxon>Murinae</taxon>
        <taxon>Rattus</taxon>
    </lineage>
</organism>
<comment type="function">
    <text evidence="1">Atypical E3 ubiquitin-protein ligase which ubiquitinates TLR2 at 'Lys-754' leading to its degradation by the proteasome. Plays a role in regulating inflammatory cytokine release and gram-positive bacterial clearance by functioning, in part, through the ubiquitination and degradation of TLR2. Inhibitor of protein phosphatase 1.</text>
</comment>
<comment type="catalytic activity">
    <reaction evidence="1">
        <text>S-ubiquitinyl-[E2 ubiquitin-conjugating enzyme]-L-cysteine + [acceptor protein]-L-lysine = [E2 ubiquitin-conjugating enzyme]-L-cysteine + N(6)-ubiquitinyl-[acceptor protein]-L-lysine.</text>
        <dbReference type="EC" id="2.3.2.27"/>
    </reaction>
</comment>
<comment type="pathway">
    <text>Protein modification; protein ubiquitination.</text>
</comment>
<comment type="subunit">
    <text evidence="2">Interacts with TLR2 and UBE2D2.</text>
</comment>
<comment type="alternative products">
    <event type="alternative splicing"/>
    <isoform>
        <id>Q6MFY6-1</id>
        <name>1</name>
        <sequence type="displayed"/>
    </isoform>
    <isoform>
        <id>Q6MFY6-2</id>
        <name>2</name>
        <sequence type="described" ref="VSP_019247"/>
    </isoform>
</comment>
<comment type="PTM">
    <text evidence="1">Auto-ubiquitinated.</text>
</comment>
<dbReference type="EC" id="2.3.2.27"/>
<dbReference type="EMBL" id="BX883051">
    <property type="protein sequence ID" value="CAE84061.1"/>
    <property type="molecule type" value="Genomic_DNA"/>
</dbReference>
<dbReference type="EMBL" id="BC079252">
    <property type="protein sequence ID" value="AAH79252.1"/>
    <property type="molecule type" value="mRNA"/>
</dbReference>
<dbReference type="RefSeq" id="NP_997707.2">
    <molecule id="Q6MFY6-1"/>
    <property type="nucleotide sequence ID" value="NM_212542.3"/>
</dbReference>
<dbReference type="SMR" id="Q6MFY6"/>
<dbReference type="FunCoup" id="Q6MFY6">
    <property type="interactions" value="1213"/>
</dbReference>
<dbReference type="STRING" id="10116.ENSRNOP00000001013"/>
<dbReference type="GlyGen" id="Q6MFY6">
    <property type="glycosylation" value="2 sites"/>
</dbReference>
<dbReference type="iPTMnet" id="Q6MFY6"/>
<dbReference type="PhosphoSitePlus" id="Q6MFY6"/>
<dbReference type="PaxDb" id="10116-ENSRNOP00000001013"/>
<dbReference type="GeneID" id="294207"/>
<dbReference type="KEGG" id="rno:294207"/>
<dbReference type="UCSC" id="RGD:1303163">
    <molecule id="Q6MFY6-1"/>
    <property type="organism name" value="rat"/>
</dbReference>
<dbReference type="AGR" id="RGD:1303163"/>
<dbReference type="CTD" id="6992"/>
<dbReference type="RGD" id="1303163">
    <property type="gene designation" value="Ppp1r11"/>
</dbReference>
<dbReference type="VEuPathDB" id="HostDB:ENSRNOG00000000780"/>
<dbReference type="eggNOG" id="KOG4102">
    <property type="taxonomic scope" value="Eukaryota"/>
</dbReference>
<dbReference type="HOGENOM" id="CLU_098333_6_2_1"/>
<dbReference type="InParanoid" id="Q6MFY6"/>
<dbReference type="OrthoDB" id="307488at2759"/>
<dbReference type="UniPathway" id="UPA00143"/>
<dbReference type="PRO" id="PR:Q6MFY6"/>
<dbReference type="Proteomes" id="UP000002494">
    <property type="component" value="Chromosome 20"/>
</dbReference>
<dbReference type="Bgee" id="ENSRNOG00000000780">
    <property type="expression patterns" value="Expressed in testis and 20 other cell types or tissues"/>
</dbReference>
<dbReference type="GO" id="GO:0005737">
    <property type="term" value="C:cytoplasm"/>
    <property type="evidence" value="ECO:0000266"/>
    <property type="project" value="RGD"/>
</dbReference>
<dbReference type="GO" id="GO:0005634">
    <property type="term" value="C:nucleus"/>
    <property type="evidence" value="ECO:0000318"/>
    <property type="project" value="GO_Central"/>
</dbReference>
<dbReference type="GO" id="GO:0019902">
    <property type="term" value="F:phosphatase binding"/>
    <property type="evidence" value="ECO:0000266"/>
    <property type="project" value="RGD"/>
</dbReference>
<dbReference type="GO" id="GO:0008157">
    <property type="term" value="F:protein phosphatase 1 binding"/>
    <property type="evidence" value="ECO:0000318"/>
    <property type="project" value="GO_Central"/>
</dbReference>
<dbReference type="GO" id="GO:0004864">
    <property type="term" value="F:protein phosphatase inhibitor activity"/>
    <property type="evidence" value="ECO:0000266"/>
    <property type="project" value="RGD"/>
</dbReference>
<dbReference type="GO" id="GO:0004865">
    <property type="term" value="F:protein serine/threonine phosphatase inhibitor activity"/>
    <property type="evidence" value="ECO:0000318"/>
    <property type="project" value="GO_Central"/>
</dbReference>
<dbReference type="GO" id="GO:0061630">
    <property type="term" value="F:ubiquitin protein ligase activity"/>
    <property type="evidence" value="ECO:0000250"/>
    <property type="project" value="UniProtKB"/>
</dbReference>
<dbReference type="GO" id="GO:0050830">
    <property type="term" value="P:defense response to Gram-positive bacterium"/>
    <property type="evidence" value="ECO:0000250"/>
    <property type="project" value="UniProtKB"/>
</dbReference>
<dbReference type="GO" id="GO:0001818">
    <property type="term" value="P:negative regulation of cytokine production"/>
    <property type="evidence" value="ECO:0000250"/>
    <property type="project" value="UniProtKB"/>
</dbReference>
<dbReference type="GO" id="GO:0016567">
    <property type="term" value="P:protein ubiquitination"/>
    <property type="evidence" value="ECO:0007669"/>
    <property type="project" value="UniProtKB-UniPathway"/>
</dbReference>
<dbReference type="GO" id="GO:0006511">
    <property type="term" value="P:ubiquitin-dependent protein catabolic process"/>
    <property type="evidence" value="ECO:0000250"/>
    <property type="project" value="UniProtKB"/>
</dbReference>
<dbReference type="InterPro" id="IPR011107">
    <property type="entry name" value="PPI_Ypi1"/>
</dbReference>
<dbReference type="PANTHER" id="PTHR20835:SF0">
    <property type="entry name" value="E3 UBIQUITIN-PROTEIN LIGASE PPP1R11"/>
    <property type="match status" value="1"/>
</dbReference>
<dbReference type="PANTHER" id="PTHR20835">
    <property type="entry name" value="E3 UBIQUITIN-PROTEIN LIGASE PPP1R11-RELATED"/>
    <property type="match status" value="1"/>
</dbReference>
<dbReference type="Pfam" id="PF07491">
    <property type="entry name" value="PPI_Ypi1"/>
    <property type="match status" value="1"/>
</dbReference>
<proteinExistence type="evidence at transcript level"/>